<accession>A6TGE4</accession>
<reference key="1">
    <citation type="submission" date="2006-09" db="EMBL/GenBank/DDBJ databases">
        <authorList>
            <consortium name="The Klebsiella pneumonia Genome Sequencing Project"/>
            <person name="McClelland M."/>
            <person name="Sanderson E.K."/>
            <person name="Spieth J."/>
            <person name="Clifton W.S."/>
            <person name="Latreille P."/>
            <person name="Sabo A."/>
            <person name="Pepin K."/>
            <person name="Bhonagiri V."/>
            <person name="Porwollik S."/>
            <person name="Ali J."/>
            <person name="Wilson R.K."/>
        </authorList>
    </citation>
    <scope>NUCLEOTIDE SEQUENCE [LARGE SCALE GENOMIC DNA]</scope>
    <source>
        <strain>ATCC 700721 / MGH 78578</strain>
    </source>
</reference>
<sequence length="457" mass="50084">MALWGGRFTQAADQRFKQFNDSLRFDYRLAEQDIVGSVAWSKALVTVGVLSAAEQQQLEEALNVLLEEVRANPQQILASDAEDIHSWVEGKLIDKVGQLGKKLHTGRSRNDQVATDLKLWCKDTVVELLSANRQLQSALVETAQQNQDAVMPGYTHLQRAQPVTFAHWCLAYVEMLARDESRLQDALKRLDVSPLGCGALAGTAYEIDREQLAGWLGFASATRNSLDSVSDRDHVLELLSDAAIGMVHLSRFAEDLIFFNSGEANFVELSDRVTSGSSLMPQKKNPDALELIRGKCGRVQGALTGMMMTLKGLPLAYNKDMQEDKEGLFDALDTWLDCLHMAALVLDGIQVKRPRCAEAAQQGYANATELADYLVAKGVPFREAHHIVGEAVVEAIAQGKPLEALTLADLQKFSPVIADDVYPILSLQSCLEKRAAKGGVSPQQVAQAINEAKARLS</sequence>
<gene>
    <name evidence="1" type="primary">argH</name>
    <name type="ordered locus">KPN78578_42040</name>
    <name type="ORF">KPN_04249</name>
</gene>
<protein>
    <recommendedName>
        <fullName evidence="1">Argininosuccinate lyase</fullName>
        <shortName evidence="1">ASAL</shortName>
        <ecNumber evidence="1">4.3.2.1</ecNumber>
    </recommendedName>
    <alternativeName>
        <fullName evidence="1">Arginosuccinase</fullName>
    </alternativeName>
</protein>
<keyword id="KW-0028">Amino-acid biosynthesis</keyword>
<keyword id="KW-0055">Arginine biosynthesis</keyword>
<keyword id="KW-0963">Cytoplasm</keyword>
<keyword id="KW-0456">Lyase</keyword>
<evidence type="ECO:0000255" key="1">
    <source>
        <dbReference type="HAMAP-Rule" id="MF_00006"/>
    </source>
</evidence>
<comment type="catalytic activity">
    <reaction evidence="1">
        <text>2-(N(omega)-L-arginino)succinate = fumarate + L-arginine</text>
        <dbReference type="Rhea" id="RHEA:24020"/>
        <dbReference type="ChEBI" id="CHEBI:29806"/>
        <dbReference type="ChEBI" id="CHEBI:32682"/>
        <dbReference type="ChEBI" id="CHEBI:57472"/>
        <dbReference type="EC" id="4.3.2.1"/>
    </reaction>
</comment>
<comment type="pathway">
    <text evidence="1">Amino-acid biosynthesis; L-arginine biosynthesis; L-arginine from L-ornithine and carbamoyl phosphate: step 3/3.</text>
</comment>
<comment type="subcellular location">
    <subcellularLocation>
        <location evidence="1">Cytoplasm</location>
    </subcellularLocation>
</comment>
<comment type="similarity">
    <text evidence="1">Belongs to the lyase 1 family. Argininosuccinate lyase subfamily.</text>
</comment>
<feature type="chain" id="PRO_1000000488" description="Argininosuccinate lyase">
    <location>
        <begin position="1"/>
        <end position="457"/>
    </location>
</feature>
<dbReference type="EC" id="4.3.2.1" evidence="1"/>
<dbReference type="EMBL" id="CP000647">
    <property type="protein sequence ID" value="ABR79628.1"/>
    <property type="molecule type" value="Genomic_DNA"/>
</dbReference>
<dbReference type="RefSeq" id="WP_004146283.1">
    <property type="nucleotide sequence ID" value="NC_009648.1"/>
</dbReference>
<dbReference type="SMR" id="A6TGE4"/>
<dbReference type="STRING" id="272620.KPN_04249"/>
<dbReference type="jPOST" id="A6TGE4"/>
<dbReference type="PaxDb" id="272620-KPN_04249"/>
<dbReference type="EnsemblBacteria" id="ABR79628">
    <property type="protein sequence ID" value="ABR79628"/>
    <property type="gene ID" value="KPN_04249"/>
</dbReference>
<dbReference type="KEGG" id="kpn:KPN_04249"/>
<dbReference type="HOGENOM" id="CLU_027272_2_3_6"/>
<dbReference type="UniPathway" id="UPA00068">
    <property type="reaction ID" value="UER00114"/>
</dbReference>
<dbReference type="Proteomes" id="UP000000265">
    <property type="component" value="Chromosome"/>
</dbReference>
<dbReference type="GO" id="GO:0005829">
    <property type="term" value="C:cytosol"/>
    <property type="evidence" value="ECO:0007669"/>
    <property type="project" value="TreeGrafter"/>
</dbReference>
<dbReference type="GO" id="GO:0004056">
    <property type="term" value="F:argininosuccinate lyase activity"/>
    <property type="evidence" value="ECO:0007669"/>
    <property type="project" value="UniProtKB-UniRule"/>
</dbReference>
<dbReference type="GO" id="GO:0042450">
    <property type="term" value="P:arginine biosynthetic process via ornithine"/>
    <property type="evidence" value="ECO:0007669"/>
    <property type="project" value="InterPro"/>
</dbReference>
<dbReference type="GO" id="GO:0006526">
    <property type="term" value="P:L-arginine biosynthetic process"/>
    <property type="evidence" value="ECO:0007669"/>
    <property type="project" value="UniProtKB-UniRule"/>
</dbReference>
<dbReference type="CDD" id="cd01359">
    <property type="entry name" value="Argininosuccinate_lyase"/>
    <property type="match status" value="1"/>
</dbReference>
<dbReference type="FunFam" id="1.10.275.10:FF:000004">
    <property type="entry name" value="Argininosuccinate lyase"/>
    <property type="match status" value="1"/>
</dbReference>
<dbReference type="FunFam" id="1.10.40.30:FF:000001">
    <property type="entry name" value="Argininosuccinate lyase"/>
    <property type="match status" value="1"/>
</dbReference>
<dbReference type="FunFam" id="1.20.200.10:FF:000006">
    <property type="entry name" value="Argininosuccinate lyase"/>
    <property type="match status" value="1"/>
</dbReference>
<dbReference type="Gene3D" id="1.10.40.30">
    <property type="entry name" value="Fumarase/aspartase (C-terminal domain)"/>
    <property type="match status" value="1"/>
</dbReference>
<dbReference type="Gene3D" id="1.20.200.10">
    <property type="entry name" value="Fumarase/aspartase (Central domain)"/>
    <property type="match status" value="1"/>
</dbReference>
<dbReference type="Gene3D" id="1.10.275.10">
    <property type="entry name" value="Fumarase/aspartase (N-terminal domain)"/>
    <property type="match status" value="1"/>
</dbReference>
<dbReference type="HAMAP" id="MF_00006">
    <property type="entry name" value="Arg_succ_lyase"/>
    <property type="match status" value="1"/>
</dbReference>
<dbReference type="InterPro" id="IPR029419">
    <property type="entry name" value="Arg_succ_lyase_C"/>
</dbReference>
<dbReference type="InterPro" id="IPR009049">
    <property type="entry name" value="Argininosuccinate_lyase"/>
</dbReference>
<dbReference type="InterPro" id="IPR024083">
    <property type="entry name" value="Fumarase/histidase_N"/>
</dbReference>
<dbReference type="InterPro" id="IPR020557">
    <property type="entry name" value="Fumarate_lyase_CS"/>
</dbReference>
<dbReference type="InterPro" id="IPR000362">
    <property type="entry name" value="Fumarate_lyase_fam"/>
</dbReference>
<dbReference type="InterPro" id="IPR022761">
    <property type="entry name" value="Fumarate_lyase_N"/>
</dbReference>
<dbReference type="InterPro" id="IPR008948">
    <property type="entry name" value="L-Aspartase-like"/>
</dbReference>
<dbReference type="NCBIfam" id="TIGR00838">
    <property type="entry name" value="argH"/>
    <property type="match status" value="1"/>
</dbReference>
<dbReference type="NCBIfam" id="NF008964">
    <property type="entry name" value="PRK12308.1"/>
    <property type="match status" value="1"/>
</dbReference>
<dbReference type="PANTHER" id="PTHR43814">
    <property type="entry name" value="ARGININOSUCCINATE LYASE"/>
    <property type="match status" value="1"/>
</dbReference>
<dbReference type="PANTHER" id="PTHR43814:SF1">
    <property type="entry name" value="ARGININOSUCCINATE LYASE"/>
    <property type="match status" value="1"/>
</dbReference>
<dbReference type="Pfam" id="PF14698">
    <property type="entry name" value="ASL_C2"/>
    <property type="match status" value="1"/>
</dbReference>
<dbReference type="Pfam" id="PF00206">
    <property type="entry name" value="Lyase_1"/>
    <property type="match status" value="1"/>
</dbReference>
<dbReference type="PRINTS" id="PR00145">
    <property type="entry name" value="ARGSUCLYASE"/>
</dbReference>
<dbReference type="PRINTS" id="PR00149">
    <property type="entry name" value="FUMRATELYASE"/>
</dbReference>
<dbReference type="SUPFAM" id="SSF48557">
    <property type="entry name" value="L-aspartase-like"/>
    <property type="match status" value="1"/>
</dbReference>
<dbReference type="PROSITE" id="PS00163">
    <property type="entry name" value="FUMARATE_LYASES"/>
    <property type="match status" value="1"/>
</dbReference>
<proteinExistence type="inferred from homology"/>
<name>ARLY_KLEP7</name>
<organism>
    <name type="scientific">Klebsiella pneumoniae subsp. pneumoniae (strain ATCC 700721 / MGH 78578)</name>
    <dbReference type="NCBI Taxonomy" id="272620"/>
    <lineage>
        <taxon>Bacteria</taxon>
        <taxon>Pseudomonadati</taxon>
        <taxon>Pseudomonadota</taxon>
        <taxon>Gammaproteobacteria</taxon>
        <taxon>Enterobacterales</taxon>
        <taxon>Enterobacteriaceae</taxon>
        <taxon>Klebsiella/Raoultella group</taxon>
        <taxon>Klebsiella</taxon>
        <taxon>Klebsiella pneumoniae complex</taxon>
    </lineage>
</organism>